<keyword id="KW-0413">Isomerase</keyword>
<keyword id="KW-1185">Reference proteome</keyword>
<keyword id="KW-0819">tRNA processing</keyword>
<accession>Q9JYY1</accession>
<sequence>MNTGKPQKRAVNGVLLLDKPEGLSSNTALQKARRLFHAEKAGHTGVLDPLATGLLPVCFGEATKFAQYLLDADKAYTATLKLGEASSTGDAEGEIIATARADISLAEFQTACQALTGNIRQVPPMFSALKHEGKPLYEYARKGIVIERKARYITVYAIDIAEFDAPKAVIDVRCSKGTYIRTLSEDIAKHIGTFAHLTALRRTETAGFTIAQSHTLEALANLNETERDSLLLPCDVLVSHFPQTVLNDYAVHMLHCGQRPRFEEDLPSDTPVRVYTENGRFVGLAEYQKEICRLKALRLMNTAASAA</sequence>
<feature type="chain" id="PRO_0000121875" description="tRNA pseudouridine synthase B">
    <location>
        <begin position="1"/>
        <end position="307"/>
    </location>
</feature>
<feature type="active site" description="Nucleophile" evidence="1">
    <location>
        <position position="48"/>
    </location>
</feature>
<gene>
    <name evidence="1" type="primary">truB</name>
    <name type="ordered locus">NMB1374</name>
</gene>
<reference key="1">
    <citation type="journal article" date="2000" name="Science">
        <title>Complete genome sequence of Neisseria meningitidis serogroup B strain MC58.</title>
        <authorList>
            <person name="Tettelin H."/>
            <person name="Saunders N.J."/>
            <person name="Heidelberg J.F."/>
            <person name="Jeffries A.C."/>
            <person name="Nelson K.E."/>
            <person name="Eisen J.A."/>
            <person name="Ketchum K.A."/>
            <person name="Hood D.W."/>
            <person name="Peden J.F."/>
            <person name="Dodson R.J."/>
            <person name="Nelson W.C."/>
            <person name="Gwinn M.L."/>
            <person name="DeBoy R.T."/>
            <person name="Peterson J.D."/>
            <person name="Hickey E.K."/>
            <person name="Haft D.H."/>
            <person name="Salzberg S.L."/>
            <person name="White O."/>
            <person name="Fleischmann R.D."/>
            <person name="Dougherty B.A."/>
            <person name="Mason T.M."/>
            <person name="Ciecko A."/>
            <person name="Parksey D.S."/>
            <person name="Blair E."/>
            <person name="Cittone H."/>
            <person name="Clark E.B."/>
            <person name="Cotton M.D."/>
            <person name="Utterback T.R."/>
            <person name="Khouri H.M."/>
            <person name="Qin H."/>
            <person name="Vamathevan J.J."/>
            <person name="Gill J."/>
            <person name="Scarlato V."/>
            <person name="Masignani V."/>
            <person name="Pizza M."/>
            <person name="Grandi G."/>
            <person name="Sun L."/>
            <person name="Smith H.O."/>
            <person name="Fraser C.M."/>
            <person name="Moxon E.R."/>
            <person name="Rappuoli R."/>
            <person name="Venter J.C."/>
        </authorList>
    </citation>
    <scope>NUCLEOTIDE SEQUENCE [LARGE SCALE GENOMIC DNA]</scope>
    <source>
        <strain>ATCC BAA-335 / MC58</strain>
    </source>
</reference>
<name>TRUB_NEIMB</name>
<comment type="function">
    <text evidence="1">Responsible for synthesis of pseudouridine from uracil-55 in the psi GC loop of transfer RNAs.</text>
</comment>
<comment type="catalytic activity">
    <reaction evidence="1">
        <text>uridine(55) in tRNA = pseudouridine(55) in tRNA</text>
        <dbReference type="Rhea" id="RHEA:42532"/>
        <dbReference type="Rhea" id="RHEA-COMP:10101"/>
        <dbReference type="Rhea" id="RHEA-COMP:10102"/>
        <dbReference type="ChEBI" id="CHEBI:65314"/>
        <dbReference type="ChEBI" id="CHEBI:65315"/>
        <dbReference type="EC" id="5.4.99.25"/>
    </reaction>
</comment>
<comment type="similarity">
    <text evidence="1">Belongs to the pseudouridine synthase TruB family. Type 1 subfamily.</text>
</comment>
<dbReference type="EC" id="5.4.99.25" evidence="1"/>
<dbReference type="EMBL" id="AE002098">
    <property type="protein sequence ID" value="AAF41748.1"/>
    <property type="molecule type" value="Genomic_DNA"/>
</dbReference>
<dbReference type="PIR" id="C81091">
    <property type="entry name" value="C81091"/>
</dbReference>
<dbReference type="RefSeq" id="NP_274392.1">
    <property type="nucleotide sequence ID" value="NC_003112.2"/>
</dbReference>
<dbReference type="RefSeq" id="WP_002222326.1">
    <property type="nucleotide sequence ID" value="NC_003112.2"/>
</dbReference>
<dbReference type="SMR" id="Q9JYY1"/>
<dbReference type="FunCoup" id="Q9JYY1">
    <property type="interactions" value="473"/>
</dbReference>
<dbReference type="STRING" id="122586.NMB1374"/>
<dbReference type="PaxDb" id="122586-NMB1374"/>
<dbReference type="KEGG" id="nme:NMB1374"/>
<dbReference type="PATRIC" id="fig|122586.8.peg.1722"/>
<dbReference type="HOGENOM" id="CLU_032087_0_3_4"/>
<dbReference type="InParanoid" id="Q9JYY1"/>
<dbReference type="OrthoDB" id="9802309at2"/>
<dbReference type="Proteomes" id="UP000000425">
    <property type="component" value="Chromosome"/>
</dbReference>
<dbReference type="GO" id="GO:0009982">
    <property type="term" value="F:pseudouridine synthase activity"/>
    <property type="evidence" value="ECO:0000318"/>
    <property type="project" value="GO_Central"/>
</dbReference>
<dbReference type="GO" id="GO:0003723">
    <property type="term" value="F:RNA binding"/>
    <property type="evidence" value="ECO:0007669"/>
    <property type="project" value="InterPro"/>
</dbReference>
<dbReference type="GO" id="GO:0160148">
    <property type="term" value="F:tRNA pseudouridine(55) synthase activity"/>
    <property type="evidence" value="ECO:0007669"/>
    <property type="project" value="UniProtKB-EC"/>
</dbReference>
<dbReference type="GO" id="GO:1990481">
    <property type="term" value="P:mRNA pseudouridine synthesis"/>
    <property type="evidence" value="ECO:0000318"/>
    <property type="project" value="GO_Central"/>
</dbReference>
<dbReference type="GO" id="GO:0006400">
    <property type="term" value="P:tRNA modification"/>
    <property type="evidence" value="ECO:0000318"/>
    <property type="project" value="GO_Central"/>
</dbReference>
<dbReference type="GO" id="GO:0031119">
    <property type="term" value="P:tRNA pseudouridine synthesis"/>
    <property type="evidence" value="ECO:0007669"/>
    <property type="project" value="UniProtKB-UniRule"/>
</dbReference>
<dbReference type="CDD" id="cd02573">
    <property type="entry name" value="PseudoU_synth_EcTruB"/>
    <property type="match status" value="1"/>
</dbReference>
<dbReference type="CDD" id="cd21152">
    <property type="entry name" value="PUA_TruB_bacterial"/>
    <property type="match status" value="1"/>
</dbReference>
<dbReference type="FunFam" id="3.30.2350.10:FF:000011">
    <property type="entry name" value="tRNA pseudouridine synthase B"/>
    <property type="match status" value="1"/>
</dbReference>
<dbReference type="Gene3D" id="3.30.2350.10">
    <property type="entry name" value="Pseudouridine synthase"/>
    <property type="match status" value="1"/>
</dbReference>
<dbReference type="Gene3D" id="2.30.130.10">
    <property type="entry name" value="PUA domain"/>
    <property type="match status" value="1"/>
</dbReference>
<dbReference type="HAMAP" id="MF_01080">
    <property type="entry name" value="TruB_bact"/>
    <property type="match status" value="1"/>
</dbReference>
<dbReference type="InterPro" id="IPR020103">
    <property type="entry name" value="PsdUridine_synth_cat_dom_sf"/>
</dbReference>
<dbReference type="InterPro" id="IPR002501">
    <property type="entry name" value="PsdUridine_synth_N"/>
</dbReference>
<dbReference type="InterPro" id="IPR015947">
    <property type="entry name" value="PUA-like_sf"/>
</dbReference>
<dbReference type="InterPro" id="IPR036974">
    <property type="entry name" value="PUA_sf"/>
</dbReference>
<dbReference type="InterPro" id="IPR014780">
    <property type="entry name" value="tRNA_psdUridine_synth_TruB"/>
</dbReference>
<dbReference type="InterPro" id="IPR015240">
    <property type="entry name" value="tRNA_sdUridine_synth_fam1_C"/>
</dbReference>
<dbReference type="InterPro" id="IPR032819">
    <property type="entry name" value="TruB_C"/>
</dbReference>
<dbReference type="NCBIfam" id="TIGR00431">
    <property type="entry name" value="TruB"/>
    <property type="match status" value="1"/>
</dbReference>
<dbReference type="PANTHER" id="PTHR13767:SF2">
    <property type="entry name" value="PSEUDOURIDYLATE SYNTHASE TRUB1"/>
    <property type="match status" value="1"/>
</dbReference>
<dbReference type="PANTHER" id="PTHR13767">
    <property type="entry name" value="TRNA-PSEUDOURIDINE SYNTHASE"/>
    <property type="match status" value="1"/>
</dbReference>
<dbReference type="Pfam" id="PF09157">
    <property type="entry name" value="TruB-C_2"/>
    <property type="match status" value="1"/>
</dbReference>
<dbReference type="Pfam" id="PF16198">
    <property type="entry name" value="TruB_C_2"/>
    <property type="match status" value="1"/>
</dbReference>
<dbReference type="Pfam" id="PF01509">
    <property type="entry name" value="TruB_N"/>
    <property type="match status" value="1"/>
</dbReference>
<dbReference type="SUPFAM" id="SSF55120">
    <property type="entry name" value="Pseudouridine synthase"/>
    <property type="match status" value="1"/>
</dbReference>
<dbReference type="SUPFAM" id="SSF88697">
    <property type="entry name" value="PUA domain-like"/>
    <property type="match status" value="1"/>
</dbReference>
<evidence type="ECO:0000255" key="1">
    <source>
        <dbReference type="HAMAP-Rule" id="MF_01080"/>
    </source>
</evidence>
<organism>
    <name type="scientific">Neisseria meningitidis serogroup B (strain ATCC BAA-335 / MC58)</name>
    <dbReference type="NCBI Taxonomy" id="122586"/>
    <lineage>
        <taxon>Bacteria</taxon>
        <taxon>Pseudomonadati</taxon>
        <taxon>Pseudomonadota</taxon>
        <taxon>Betaproteobacteria</taxon>
        <taxon>Neisseriales</taxon>
        <taxon>Neisseriaceae</taxon>
        <taxon>Neisseria</taxon>
    </lineage>
</organism>
<proteinExistence type="inferred from homology"/>
<protein>
    <recommendedName>
        <fullName evidence="1">tRNA pseudouridine synthase B</fullName>
        <ecNumber evidence="1">5.4.99.25</ecNumber>
    </recommendedName>
    <alternativeName>
        <fullName evidence="1">tRNA pseudouridine(55) synthase</fullName>
        <shortName evidence="1">Psi55 synthase</shortName>
    </alternativeName>
    <alternativeName>
        <fullName evidence="1">tRNA pseudouridylate synthase</fullName>
    </alternativeName>
    <alternativeName>
        <fullName evidence="1">tRNA-uridine isomerase</fullName>
    </alternativeName>
</protein>